<proteinExistence type="inferred from homology"/>
<feature type="chain" id="PRO_1000024733" description="Adenosylhomocysteinase">
    <location>
        <begin position="1"/>
        <end position="489"/>
    </location>
</feature>
<feature type="binding site" evidence="1">
    <location>
        <position position="68"/>
    </location>
    <ligand>
        <name>substrate</name>
    </ligand>
</feature>
<feature type="binding site" evidence="1">
    <location>
        <position position="151"/>
    </location>
    <ligand>
        <name>substrate</name>
    </ligand>
</feature>
<feature type="binding site" evidence="1">
    <location>
        <position position="213"/>
    </location>
    <ligand>
        <name>substrate</name>
    </ligand>
</feature>
<feature type="binding site" evidence="1">
    <location>
        <begin position="214"/>
        <end position="216"/>
    </location>
    <ligand>
        <name>NAD(+)</name>
        <dbReference type="ChEBI" id="CHEBI:57540"/>
    </ligand>
</feature>
<feature type="binding site" evidence="1">
    <location>
        <position position="243"/>
    </location>
    <ligand>
        <name>substrate</name>
    </ligand>
</feature>
<feature type="binding site" evidence="1">
    <location>
        <position position="247"/>
    </location>
    <ligand>
        <name>substrate</name>
    </ligand>
</feature>
<feature type="binding site" evidence="1">
    <location>
        <position position="248"/>
    </location>
    <ligand>
        <name>NAD(+)</name>
        <dbReference type="ChEBI" id="CHEBI:57540"/>
    </ligand>
</feature>
<feature type="binding site" evidence="1">
    <location>
        <begin position="277"/>
        <end position="282"/>
    </location>
    <ligand>
        <name>NAD(+)</name>
        <dbReference type="ChEBI" id="CHEBI:57540"/>
    </ligand>
</feature>
<feature type="binding site" evidence="1">
    <location>
        <position position="300"/>
    </location>
    <ligand>
        <name>NAD(+)</name>
        <dbReference type="ChEBI" id="CHEBI:57540"/>
    </ligand>
</feature>
<feature type="binding site" evidence="1">
    <location>
        <position position="335"/>
    </location>
    <ligand>
        <name>NAD(+)</name>
        <dbReference type="ChEBI" id="CHEBI:57540"/>
    </ligand>
</feature>
<feature type="binding site" evidence="1">
    <location>
        <begin position="356"/>
        <end position="358"/>
    </location>
    <ligand>
        <name>NAD(+)</name>
        <dbReference type="ChEBI" id="CHEBI:57540"/>
    </ligand>
</feature>
<feature type="binding site" evidence="1">
    <location>
        <position position="403"/>
    </location>
    <ligand>
        <name>NAD(+)</name>
        <dbReference type="ChEBI" id="CHEBI:57540"/>
    </ligand>
</feature>
<comment type="function">
    <text evidence="1">May play a key role in the regulation of the intracellular concentration of adenosylhomocysteine.</text>
</comment>
<comment type="catalytic activity">
    <reaction evidence="1">
        <text>S-adenosyl-L-homocysteine + H2O = L-homocysteine + adenosine</text>
        <dbReference type="Rhea" id="RHEA:21708"/>
        <dbReference type="ChEBI" id="CHEBI:15377"/>
        <dbReference type="ChEBI" id="CHEBI:16335"/>
        <dbReference type="ChEBI" id="CHEBI:57856"/>
        <dbReference type="ChEBI" id="CHEBI:58199"/>
        <dbReference type="EC" id="3.13.2.1"/>
    </reaction>
</comment>
<comment type="cofactor">
    <cofactor evidence="1">
        <name>NAD(+)</name>
        <dbReference type="ChEBI" id="CHEBI:57540"/>
    </cofactor>
    <text evidence="1">Binds 1 NAD(+) per subunit.</text>
</comment>
<comment type="pathway">
    <text evidence="1">Amino-acid biosynthesis; L-homocysteine biosynthesis; L-homocysteine from S-adenosyl-L-homocysteine: step 1/1.</text>
</comment>
<comment type="subcellular location">
    <subcellularLocation>
        <location evidence="1">Cytoplasm</location>
    </subcellularLocation>
</comment>
<comment type="similarity">
    <text evidence="1">Belongs to the adenosylhomocysteinase family.</text>
</comment>
<protein>
    <recommendedName>
        <fullName evidence="1">Adenosylhomocysteinase</fullName>
        <ecNumber evidence="1">3.13.2.1</ecNumber>
    </recommendedName>
    <alternativeName>
        <fullName evidence="1">S-adenosyl-L-homocysteine hydrolase</fullName>
        <shortName evidence="1">AdoHcyase</shortName>
    </alternativeName>
</protein>
<name>SAHH_MYCSJ</name>
<dbReference type="EC" id="3.13.2.1" evidence="1"/>
<dbReference type="EMBL" id="CP000580">
    <property type="protein sequence ID" value="ABN97174.1"/>
    <property type="molecule type" value="Genomic_DNA"/>
</dbReference>
<dbReference type="SMR" id="A3PW97"/>
<dbReference type="KEGG" id="mjl:Mjls_1372"/>
<dbReference type="HOGENOM" id="CLU_025194_2_1_11"/>
<dbReference type="BioCyc" id="MSP164757:G1G8C-1386-MONOMER"/>
<dbReference type="UniPathway" id="UPA00314">
    <property type="reaction ID" value="UER00076"/>
</dbReference>
<dbReference type="GO" id="GO:0005829">
    <property type="term" value="C:cytosol"/>
    <property type="evidence" value="ECO:0007669"/>
    <property type="project" value="TreeGrafter"/>
</dbReference>
<dbReference type="GO" id="GO:0004013">
    <property type="term" value="F:adenosylhomocysteinase activity"/>
    <property type="evidence" value="ECO:0007669"/>
    <property type="project" value="UniProtKB-UniRule"/>
</dbReference>
<dbReference type="GO" id="GO:0071269">
    <property type="term" value="P:L-homocysteine biosynthetic process"/>
    <property type="evidence" value="ECO:0007669"/>
    <property type="project" value="UniProtKB-UniRule"/>
</dbReference>
<dbReference type="GO" id="GO:0006730">
    <property type="term" value="P:one-carbon metabolic process"/>
    <property type="evidence" value="ECO:0007669"/>
    <property type="project" value="UniProtKB-KW"/>
</dbReference>
<dbReference type="GO" id="GO:0033353">
    <property type="term" value="P:S-adenosylmethionine cycle"/>
    <property type="evidence" value="ECO:0007669"/>
    <property type="project" value="TreeGrafter"/>
</dbReference>
<dbReference type="CDD" id="cd00401">
    <property type="entry name" value="SAHH"/>
    <property type="match status" value="1"/>
</dbReference>
<dbReference type="FunFam" id="3.40.50.720:FF:000004">
    <property type="entry name" value="Adenosylhomocysteinase"/>
    <property type="match status" value="1"/>
</dbReference>
<dbReference type="Gene3D" id="3.40.50.1480">
    <property type="entry name" value="Adenosylhomocysteinase-like"/>
    <property type="match status" value="1"/>
</dbReference>
<dbReference type="Gene3D" id="3.40.50.720">
    <property type="entry name" value="NAD(P)-binding Rossmann-like Domain"/>
    <property type="match status" value="1"/>
</dbReference>
<dbReference type="HAMAP" id="MF_00563">
    <property type="entry name" value="AdoHcyase"/>
    <property type="match status" value="1"/>
</dbReference>
<dbReference type="InterPro" id="IPR042172">
    <property type="entry name" value="Adenosylhomocyst_ase-like_sf"/>
</dbReference>
<dbReference type="InterPro" id="IPR000043">
    <property type="entry name" value="Adenosylhomocysteinase-like"/>
</dbReference>
<dbReference type="InterPro" id="IPR015878">
    <property type="entry name" value="Ado_hCys_hydrolase_NAD-bd"/>
</dbReference>
<dbReference type="InterPro" id="IPR036291">
    <property type="entry name" value="NAD(P)-bd_dom_sf"/>
</dbReference>
<dbReference type="InterPro" id="IPR020082">
    <property type="entry name" value="S-Ado-L-homoCys_hydrolase_CS"/>
</dbReference>
<dbReference type="NCBIfam" id="TIGR00936">
    <property type="entry name" value="ahcY"/>
    <property type="match status" value="1"/>
</dbReference>
<dbReference type="NCBIfam" id="NF004005">
    <property type="entry name" value="PRK05476.2-3"/>
    <property type="match status" value="1"/>
</dbReference>
<dbReference type="PANTHER" id="PTHR23420">
    <property type="entry name" value="ADENOSYLHOMOCYSTEINASE"/>
    <property type="match status" value="1"/>
</dbReference>
<dbReference type="PANTHER" id="PTHR23420:SF0">
    <property type="entry name" value="ADENOSYLHOMOCYSTEINASE"/>
    <property type="match status" value="1"/>
</dbReference>
<dbReference type="Pfam" id="PF05221">
    <property type="entry name" value="AdoHcyase"/>
    <property type="match status" value="1"/>
</dbReference>
<dbReference type="Pfam" id="PF00670">
    <property type="entry name" value="AdoHcyase_NAD"/>
    <property type="match status" value="1"/>
</dbReference>
<dbReference type="PIRSF" id="PIRSF001109">
    <property type="entry name" value="Ad_hcy_hydrolase"/>
    <property type="match status" value="1"/>
</dbReference>
<dbReference type="SMART" id="SM00996">
    <property type="entry name" value="AdoHcyase"/>
    <property type="match status" value="1"/>
</dbReference>
<dbReference type="SMART" id="SM00997">
    <property type="entry name" value="AdoHcyase_NAD"/>
    <property type="match status" value="1"/>
</dbReference>
<dbReference type="SUPFAM" id="SSF52283">
    <property type="entry name" value="Formate/glycerate dehydrogenase catalytic domain-like"/>
    <property type="match status" value="1"/>
</dbReference>
<dbReference type="SUPFAM" id="SSF51735">
    <property type="entry name" value="NAD(P)-binding Rossmann-fold domains"/>
    <property type="match status" value="1"/>
</dbReference>
<dbReference type="PROSITE" id="PS00738">
    <property type="entry name" value="ADOHCYASE_1"/>
    <property type="match status" value="1"/>
</dbReference>
<dbReference type="PROSITE" id="PS00739">
    <property type="entry name" value="ADOHCYASE_2"/>
    <property type="match status" value="1"/>
</dbReference>
<evidence type="ECO:0000255" key="1">
    <source>
        <dbReference type="HAMAP-Rule" id="MF_00563"/>
    </source>
</evidence>
<reference key="1">
    <citation type="submission" date="2007-02" db="EMBL/GenBank/DDBJ databases">
        <title>Complete sequence of Mycobacterium sp. JLS.</title>
        <authorList>
            <consortium name="US DOE Joint Genome Institute"/>
            <person name="Copeland A."/>
            <person name="Lucas S."/>
            <person name="Lapidus A."/>
            <person name="Barry K."/>
            <person name="Detter J.C."/>
            <person name="Glavina del Rio T."/>
            <person name="Hammon N."/>
            <person name="Israni S."/>
            <person name="Dalin E."/>
            <person name="Tice H."/>
            <person name="Pitluck S."/>
            <person name="Chain P."/>
            <person name="Malfatti S."/>
            <person name="Shin M."/>
            <person name="Vergez L."/>
            <person name="Schmutz J."/>
            <person name="Larimer F."/>
            <person name="Land M."/>
            <person name="Hauser L."/>
            <person name="Kyrpides N."/>
            <person name="Mikhailova N."/>
            <person name="Miller C.D."/>
            <person name="Anderson A.J."/>
            <person name="Sims R.C."/>
            <person name="Richardson P."/>
        </authorList>
    </citation>
    <scope>NUCLEOTIDE SEQUENCE [LARGE SCALE GENOMIC DNA]</scope>
    <source>
        <strain>JLS</strain>
    </source>
</reference>
<accession>A3PW97</accession>
<organism>
    <name type="scientific">Mycobacterium sp. (strain JLS)</name>
    <dbReference type="NCBI Taxonomy" id="164757"/>
    <lineage>
        <taxon>Bacteria</taxon>
        <taxon>Bacillati</taxon>
        <taxon>Actinomycetota</taxon>
        <taxon>Actinomycetes</taxon>
        <taxon>Mycobacteriales</taxon>
        <taxon>Mycobacteriaceae</taxon>
        <taxon>Mycobacterium</taxon>
    </lineage>
</organism>
<gene>
    <name evidence="1" type="primary">ahcY</name>
    <name type="ordered locus">Mjls_1372</name>
</gene>
<sequence>MTTTEQRLTVESRNGIDYKVADLSLAEFGRKEIRLAEHEMPGLMALRREYAEVAPLKGARISGSLHMTVQTAVLIETLVSLGAEVRWASCNIFSTQDHAAAAVVVGPHGTPEEPKGTPVFAWKGETLEEYWWAAEQMLTWPGEPANMILDDGGDATMLVLRGAQFEKAGVVPPAEDDDSAEYKVFLNLLRERFETDKTKWTKIAESVKGVTEETTTGVLRLYQFEAAGELPFPAINVNDSVTKSKFDNKYGTRHSLIDGINRGTDVLIGGKKVLICGYGDVGKGCAESLAGQGARVQVTEIDPINALQALMDGFDVVTVEQAIGSADIVITSTGNKDIITLDHMKAMKDKAILGNIGHFDNEIDMAALERSGATRINIKPQVDEWTFDDGHSIVVLSEGRLLNLGNATGHPSFVMSNSFSNQVIAQIELWTKNDEYDNAVYRLAKHLDEKVARIHVEALGGTLTKLTKEQAEYINVDVEGPYKPEHYRY</sequence>
<keyword id="KW-0963">Cytoplasm</keyword>
<keyword id="KW-0378">Hydrolase</keyword>
<keyword id="KW-0520">NAD</keyword>
<keyword id="KW-0554">One-carbon metabolism</keyword>